<evidence type="ECO:0000255" key="1">
    <source>
        <dbReference type="HAMAP-Rule" id="MF_00235"/>
    </source>
</evidence>
<dbReference type="EC" id="2.7.4.3" evidence="1"/>
<dbReference type="EMBL" id="CP000613">
    <property type="protein sequence ID" value="ACI98163.1"/>
    <property type="molecule type" value="Genomic_DNA"/>
</dbReference>
<dbReference type="RefSeq" id="WP_012565954.1">
    <property type="nucleotide sequence ID" value="NC_011420.2"/>
</dbReference>
<dbReference type="SMR" id="B6IRS7"/>
<dbReference type="STRING" id="414684.RC1_0732"/>
<dbReference type="KEGG" id="rce:RC1_0732"/>
<dbReference type="eggNOG" id="COG0563">
    <property type="taxonomic scope" value="Bacteria"/>
</dbReference>
<dbReference type="HOGENOM" id="CLU_032354_1_2_5"/>
<dbReference type="OrthoDB" id="9805030at2"/>
<dbReference type="UniPathway" id="UPA00588">
    <property type="reaction ID" value="UER00649"/>
</dbReference>
<dbReference type="Proteomes" id="UP000001591">
    <property type="component" value="Chromosome"/>
</dbReference>
<dbReference type="GO" id="GO:0005737">
    <property type="term" value="C:cytoplasm"/>
    <property type="evidence" value="ECO:0007669"/>
    <property type="project" value="UniProtKB-SubCell"/>
</dbReference>
<dbReference type="GO" id="GO:0004017">
    <property type="term" value="F:adenylate kinase activity"/>
    <property type="evidence" value="ECO:0007669"/>
    <property type="project" value="UniProtKB-UniRule"/>
</dbReference>
<dbReference type="GO" id="GO:0005524">
    <property type="term" value="F:ATP binding"/>
    <property type="evidence" value="ECO:0007669"/>
    <property type="project" value="UniProtKB-UniRule"/>
</dbReference>
<dbReference type="GO" id="GO:0008270">
    <property type="term" value="F:zinc ion binding"/>
    <property type="evidence" value="ECO:0007669"/>
    <property type="project" value="UniProtKB-UniRule"/>
</dbReference>
<dbReference type="GO" id="GO:0044209">
    <property type="term" value="P:AMP salvage"/>
    <property type="evidence" value="ECO:0007669"/>
    <property type="project" value="UniProtKB-UniRule"/>
</dbReference>
<dbReference type="CDD" id="cd01428">
    <property type="entry name" value="ADK"/>
    <property type="match status" value="1"/>
</dbReference>
<dbReference type="FunFam" id="3.40.50.300:FF:000106">
    <property type="entry name" value="Adenylate kinase mitochondrial"/>
    <property type="match status" value="1"/>
</dbReference>
<dbReference type="Gene3D" id="3.40.50.300">
    <property type="entry name" value="P-loop containing nucleotide triphosphate hydrolases"/>
    <property type="match status" value="1"/>
</dbReference>
<dbReference type="HAMAP" id="MF_00235">
    <property type="entry name" value="Adenylate_kinase_Adk"/>
    <property type="match status" value="1"/>
</dbReference>
<dbReference type="InterPro" id="IPR006259">
    <property type="entry name" value="Adenyl_kin_sub"/>
</dbReference>
<dbReference type="InterPro" id="IPR000850">
    <property type="entry name" value="Adenylat/UMP-CMP_kin"/>
</dbReference>
<dbReference type="InterPro" id="IPR033690">
    <property type="entry name" value="Adenylat_kinase_CS"/>
</dbReference>
<dbReference type="InterPro" id="IPR007862">
    <property type="entry name" value="Adenylate_kinase_lid-dom"/>
</dbReference>
<dbReference type="InterPro" id="IPR027417">
    <property type="entry name" value="P-loop_NTPase"/>
</dbReference>
<dbReference type="NCBIfam" id="TIGR01351">
    <property type="entry name" value="adk"/>
    <property type="match status" value="1"/>
</dbReference>
<dbReference type="NCBIfam" id="NF001380">
    <property type="entry name" value="PRK00279.1-2"/>
    <property type="match status" value="1"/>
</dbReference>
<dbReference type="NCBIfam" id="NF001381">
    <property type="entry name" value="PRK00279.1-3"/>
    <property type="match status" value="1"/>
</dbReference>
<dbReference type="NCBIfam" id="NF011100">
    <property type="entry name" value="PRK14527.1"/>
    <property type="match status" value="1"/>
</dbReference>
<dbReference type="NCBIfam" id="NF011105">
    <property type="entry name" value="PRK14532.1"/>
    <property type="match status" value="1"/>
</dbReference>
<dbReference type="PANTHER" id="PTHR23359">
    <property type="entry name" value="NUCLEOTIDE KINASE"/>
    <property type="match status" value="1"/>
</dbReference>
<dbReference type="Pfam" id="PF00406">
    <property type="entry name" value="ADK"/>
    <property type="match status" value="1"/>
</dbReference>
<dbReference type="Pfam" id="PF05191">
    <property type="entry name" value="ADK_lid"/>
    <property type="match status" value="1"/>
</dbReference>
<dbReference type="PRINTS" id="PR00094">
    <property type="entry name" value="ADENYLTKNASE"/>
</dbReference>
<dbReference type="SUPFAM" id="SSF52540">
    <property type="entry name" value="P-loop containing nucleoside triphosphate hydrolases"/>
    <property type="match status" value="1"/>
</dbReference>
<dbReference type="PROSITE" id="PS00113">
    <property type="entry name" value="ADENYLATE_KINASE"/>
    <property type="match status" value="1"/>
</dbReference>
<reference key="1">
    <citation type="submission" date="2007-03" db="EMBL/GenBank/DDBJ databases">
        <title>Genome sequence of Rhodospirillum centenum.</title>
        <authorList>
            <person name="Touchman J.W."/>
            <person name="Bauer C."/>
            <person name="Blankenship R.E."/>
        </authorList>
    </citation>
    <scope>NUCLEOTIDE SEQUENCE [LARGE SCALE GENOMIC DNA]</scope>
    <source>
        <strain>ATCC 51521 / SW</strain>
    </source>
</reference>
<sequence length="215" mass="23418">MNLILLGPPGAGKGTQAQRLERTRGMVQLSTGDMLRALVRSGSPLGQRADAIMKAGQLVPDEVMIEMISDRIEQPDCAKGFILDGFPRTVVQAEALDRMLAEKGLRLDHVIEMVVDDAALTERITGRFTCAKCGTGYHDTFKRPAQDGVCDVCGSTEFTRRADDNAETVGKRLEAYHRQTAPILPYYADRGVLKKVDGMADIAEVARQIEAIIAG</sequence>
<organism>
    <name type="scientific">Rhodospirillum centenum (strain ATCC 51521 / SW)</name>
    <dbReference type="NCBI Taxonomy" id="414684"/>
    <lineage>
        <taxon>Bacteria</taxon>
        <taxon>Pseudomonadati</taxon>
        <taxon>Pseudomonadota</taxon>
        <taxon>Alphaproteobacteria</taxon>
        <taxon>Rhodospirillales</taxon>
        <taxon>Rhodospirillaceae</taxon>
        <taxon>Rhodospirillum</taxon>
    </lineage>
</organism>
<accession>B6IRS7</accession>
<name>KAD_RHOCS</name>
<protein>
    <recommendedName>
        <fullName evidence="1">Adenylate kinase</fullName>
        <shortName evidence="1">AK</shortName>
        <ecNumber evidence="1">2.7.4.3</ecNumber>
    </recommendedName>
    <alternativeName>
        <fullName evidence="1">ATP-AMP transphosphorylase</fullName>
    </alternativeName>
    <alternativeName>
        <fullName evidence="1">ATP:AMP phosphotransferase</fullName>
    </alternativeName>
    <alternativeName>
        <fullName evidence="1">Adenylate monophosphate kinase</fullName>
    </alternativeName>
</protein>
<proteinExistence type="inferred from homology"/>
<feature type="chain" id="PRO_1000100599" description="Adenylate kinase">
    <location>
        <begin position="1"/>
        <end position="215"/>
    </location>
</feature>
<feature type="region of interest" description="NMP" evidence="1">
    <location>
        <begin position="30"/>
        <end position="59"/>
    </location>
</feature>
<feature type="region of interest" description="LID" evidence="1">
    <location>
        <begin position="126"/>
        <end position="164"/>
    </location>
</feature>
<feature type="binding site" evidence="1">
    <location>
        <begin position="10"/>
        <end position="15"/>
    </location>
    <ligand>
        <name>ATP</name>
        <dbReference type="ChEBI" id="CHEBI:30616"/>
    </ligand>
</feature>
<feature type="binding site" evidence="1">
    <location>
        <position position="31"/>
    </location>
    <ligand>
        <name>AMP</name>
        <dbReference type="ChEBI" id="CHEBI:456215"/>
    </ligand>
</feature>
<feature type="binding site" evidence="1">
    <location>
        <position position="36"/>
    </location>
    <ligand>
        <name>AMP</name>
        <dbReference type="ChEBI" id="CHEBI:456215"/>
    </ligand>
</feature>
<feature type="binding site" evidence="1">
    <location>
        <begin position="57"/>
        <end position="59"/>
    </location>
    <ligand>
        <name>AMP</name>
        <dbReference type="ChEBI" id="CHEBI:456215"/>
    </ligand>
</feature>
<feature type="binding site" evidence="1">
    <location>
        <begin position="85"/>
        <end position="88"/>
    </location>
    <ligand>
        <name>AMP</name>
        <dbReference type="ChEBI" id="CHEBI:456215"/>
    </ligand>
</feature>
<feature type="binding site" evidence="1">
    <location>
        <position position="92"/>
    </location>
    <ligand>
        <name>AMP</name>
        <dbReference type="ChEBI" id="CHEBI:456215"/>
    </ligand>
</feature>
<feature type="binding site" evidence="1">
    <location>
        <position position="127"/>
    </location>
    <ligand>
        <name>ATP</name>
        <dbReference type="ChEBI" id="CHEBI:30616"/>
    </ligand>
</feature>
<feature type="binding site" evidence="1">
    <location>
        <position position="130"/>
    </location>
    <ligand>
        <name>Zn(2+)</name>
        <dbReference type="ChEBI" id="CHEBI:29105"/>
        <note>structural</note>
    </ligand>
</feature>
<feature type="binding site" evidence="1">
    <location>
        <position position="133"/>
    </location>
    <ligand>
        <name>Zn(2+)</name>
        <dbReference type="ChEBI" id="CHEBI:29105"/>
        <note>structural</note>
    </ligand>
</feature>
<feature type="binding site" evidence="1">
    <location>
        <position position="150"/>
    </location>
    <ligand>
        <name>Zn(2+)</name>
        <dbReference type="ChEBI" id="CHEBI:29105"/>
        <note>structural</note>
    </ligand>
</feature>
<feature type="binding site" evidence="1">
    <location>
        <position position="153"/>
    </location>
    <ligand>
        <name>Zn(2+)</name>
        <dbReference type="ChEBI" id="CHEBI:29105"/>
        <note>structural</note>
    </ligand>
</feature>
<feature type="binding site" evidence="1">
    <location>
        <position position="161"/>
    </location>
    <ligand>
        <name>AMP</name>
        <dbReference type="ChEBI" id="CHEBI:456215"/>
    </ligand>
</feature>
<feature type="binding site" evidence="1">
    <location>
        <position position="172"/>
    </location>
    <ligand>
        <name>AMP</name>
        <dbReference type="ChEBI" id="CHEBI:456215"/>
    </ligand>
</feature>
<feature type="binding site" evidence="1">
    <location>
        <position position="200"/>
    </location>
    <ligand>
        <name>ATP</name>
        <dbReference type="ChEBI" id="CHEBI:30616"/>
    </ligand>
</feature>
<comment type="function">
    <text evidence="1">Catalyzes the reversible transfer of the terminal phosphate group between ATP and AMP. Plays an important role in cellular energy homeostasis and in adenine nucleotide metabolism.</text>
</comment>
<comment type="catalytic activity">
    <reaction evidence="1">
        <text>AMP + ATP = 2 ADP</text>
        <dbReference type="Rhea" id="RHEA:12973"/>
        <dbReference type="ChEBI" id="CHEBI:30616"/>
        <dbReference type="ChEBI" id="CHEBI:456215"/>
        <dbReference type="ChEBI" id="CHEBI:456216"/>
        <dbReference type="EC" id="2.7.4.3"/>
    </reaction>
</comment>
<comment type="pathway">
    <text evidence="1">Purine metabolism; AMP biosynthesis via salvage pathway; AMP from ADP: step 1/1.</text>
</comment>
<comment type="subunit">
    <text evidence="1">Monomer.</text>
</comment>
<comment type="subcellular location">
    <subcellularLocation>
        <location evidence="1">Cytoplasm</location>
    </subcellularLocation>
</comment>
<comment type="domain">
    <text evidence="1">Consists of three domains, a large central CORE domain and two small peripheral domains, NMPbind and LID, which undergo movements during catalysis. The LID domain closes over the site of phosphoryl transfer upon ATP binding. Assembling and dissambling the active center during each catalytic cycle provides an effective means to prevent ATP hydrolysis. Some bacteria have evolved a zinc-coordinating structure that stabilizes the LID domain.</text>
</comment>
<comment type="similarity">
    <text evidence="1">Belongs to the adenylate kinase family.</text>
</comment>
<gene>
    <name evidence="1" type="primary">adk</name>
    <name type="ordered locus">RC1_0732</name>
</gene>
<keyword id="KW-0067">ATP-binding</keyword>
<keyword id="KW-0963">Cytoplasm</keyword>
<keyword id="KW-0418">Kinase</keyword>
<keyword id="KW-0479">Metal-binding</keyword>
<keyword id="KW-0545">Nucleotide biosynthesis</keyword>
<keyword id="KW-0547">Nucleotide-binding</keyword>
<keyword id="KW-1185">Reference proteome</keyword>
<keyword id="KW-0808">Transferase</keyword>
<keyword id="KW-0862">Zinc</keyword>